<proteinExistence type="inferred from homology"/>
<evidence type="ECO:0000255" key="1">
    <source>
        <dbReference type="HAMAP-Rule" id="MF_00354"/>
    </source>
</evidence>
<dbReference type="EC" id="5.3.3.2" evidence="1"/>
<dbReference type="EMBL" id="AJ248286">
    <property type="protein sequence ID" value="CAB49977.1"/>
    <property type="molecule type" value="Genomic_DNA"/>
</dbReference>
<dbReference type="EMBL" id="HE613800">
    <property type="protein sequence ID" value="CCE70477.1"/>
    <property type="molecule type" value="Genomic_DNA"/>
</dbReference>
<dbReference type="PIR" id="D75084">
    <property type="entry name" value="D75084"/>
</dbReference>
<dbReference type="RefSeq" id="WP_010868185.1">
    <property type="nucleotide sequence ID" value="NC_000868.1"/>
</dbReference>
<dbReference type="SMR" id="Q9UZS9"/>
<dbReference type="STRING" id="272844.PAB1662"/>
<dbReference type="KEGG" id="pab:PAB1662"/>
<dbReference type="PATRIC" id="fig|272844.11.peg.1123"/>
<dbReference type="eggNOG" id="arCOG00613">
    <property type="taxonomic scope" value="Archaea"/>
</dbReference>
<dbReference type="HOGENOM" id="CLU_065515_1_0_2"/>
<dbReference type="OrthoDB" id="371955at2157"/>
<dbReference type="PhylomeDB" id="Q9UZS9"/>
<dbReference type="Proteomes" id="UP000000810">
    <property type="component" value="Chromosome"/>
</dbReference>
<dbReference type="Proteomes" id="UP000009139">
    <property type="component" value="Chromosome"/>
</dbReference>
<dbReference type="GO" id="GO:0005737">
    <property type="term" value="C:cytoplasm"/>
    <property type="evidence" value="ECO:0007669"/>
    <property type="project" value="UniProtKB-SubCell"/>
</dbReference>
<dbReference type="GO" id="GO:0010181">
    <property type="term" value="F:FMN binding"/>
    <property type="evidence" value="ECO:0007669"/>
    <property type="project" value="UniProtKB-UniRule"/>
</dbReference>
<dbReference type="GO" id="GO:0004452">
    <property type="term" value="F:isopentenyl-diphosphate delta-isomerase activity"/>
    <property type="evidence" value="ECO:0007669"/>
    <property type="project" value="UniProtKB-UniRule"/>
</dbReference>
<dbReference type="GO" id="GO:0000287">
    <property type="term" value="F:magnesium ion binding"/>
    <property type="evidence" value="ECO:0007669"/>
    <property type="project" value="UniProtKB-UniRule"/>
</dbReference>
<dbReference type="GO" id="GO:0070402">
    <property type="term" value="F:NADPH binding"/>
    <property type="evidence" value="ECO:0007669"/>
    <property type="project" value="UniProtKB-UniRule"/>
</dbReference>
<dbReference type="GO" id="GO:0016491">
    <property type="term" value="F:oxidoreductase activity"/>
    <property type="evidence" value="ECO:0007669"/>
    <property type="project" value="InterPro"/>
</dbReference>
<dbReference type="GO" id="GO:0008299">
    <property type="term" value="P:isoprenoid biosynthetic process"/>
    <property type="evidence" value="ECO:0007669"/>
    <property type="project" value="UniProtKB-UniRule"/>
</dbReference>
<dbReference type="CDD" id="cd02811">
    <property type="entry name" value="IDI-2_FMN"/>
    <property type="match status" value="1"/>
</dbReference>
<dbReference type="Gene3D" id="3.20.20.70">
    <property type="entry name" value="Aldolase class I"/>
    <property type="match status" value="1"/>
</dbReference>
<dbReference type="HAMAP" id="MF_00354">
    <property type="entry name" value="Idi_2"/>
    <property type="match status" value="1"/>
</dbReference>
<dbReference type="InterPro" id="IPR013785">
    <property type="entry name" value="Aldolase_TIM"/>
</dbReference>
<dbReference type="InterPro" id="IPR000262">
    <property type="entry name" value="FMN-dep_DH"/>
</dbReference>
<dbReference type="InterPro" id="IPR011179">
    <property type="entry name" value="IPdP_isomerase"/>
</dbReference>
<dbReference type="NCBIfam" id="TIGR02151">
    <property type="entry name" value="IPP_isom_2"/>
    <property type="match status" value="1"/>
</dbReference>
<dbReference type="PANTHER" id="PTHR43665">
    <property type="entry name" value="ISOPENTENYL-DIPHOSPHATE DELTA-ISOMERASE"/>
    <property type="match status" value="1"/>
</dbReference>
<dbReference type="PANTHER" id="PTHR43665:SF1">
    <property type="entry name" value="ISOPENTENYL-DIPHOSPHATE DELTA-ISOMERASE"/>
    <property type="match status" value="1"/>
</dbReference>
<dbReference type="Pfam" id="PF01070">
    <property type="entry name" value="FMN_dh"/>
    <property type="match status" value="1"/>
</dbReference>
<dbReference type="PIRSF" id="PIRSF003314">
    <property type="entry name" value="IPP_isomerase"/>
    <property type="match status" value="1"/>
</dbReference>
<dbReference type="SMART" id="SM01240">
    <property type="entry name" value="IMPDH"/>
    <property type="match status" value="1"/>
</dbReference>
<dbReference type="SUPFAM" id="SSF51395">
    <property type="entry name" value="FMN-linked oxidoreductases"/>
    <property type="match status" value="1"/>
</dbReference>
<accession>Q9UZS9</accession>
<accession>G8ZJL8</accession>
<name>IDI2_PYRAB</name>
<reference key="1">
    <citation type="journal article" date="2003" name="Mol. Microbiol.">
        <title>An integrated analysis of the genome of the hyperthermophilic archaeon Pyrococcus abyssi.</title>
        <authorList>
            <person name="Cohen G.N."/>
            <person name="Barbe V."/>
            <person name="Flament D."/>
            <person name="Galperin M."/>
            <person name="Heilig R."/>
            <person name="Lecompte O."/>
            <person name="Poch O."/>
            <person name="Prieur D."/>
            <person name="Querellou J."/>
            <person name="Ripp R."/>
            <person name="Thierry J.-C."/>
            <person name="Van der Oost J."/>
            <person name="Weissenbach J."/>
            <person name="Zivanovic Y."/>
            <person name="Forterre P."/>
        </authorList>
    </citation>
    <scope>NUCLEOTIDE SEQUENCE [LARGE SCALE GENOMIC DNA]</scope>
    <source>
        <strain>GE5 / Orsay</strain>
    </source>
</reference>
<reference key="2">
    <citation type="journal article" date="2012" name="Curr. Microbiol.">
        <title>Re-annotation of two hyperthermophilic archaea Pyrococcus abyssi GE5 and Pyrococcus furiosus DSM 3638.</title>
        <authorList>
            <person name="Gao J."/>
            <person name="Wang J."/>
        </authorList>
    </citation>
    <scope>GENOME REANNOTATION</scope>
    <source>
        <strain>GE5 / Orsay</strain>
    </source>
</reference>
<feature type="chain" id="PRO_0000134449" description="Isopentenyl-diphosphate delta-isomerase">
    <location>
        <begin position="1"/>
        <end position="370"/>
    </location>
</feature>
<feature type="binding site" evidence="1">
    <location>
        <begin position="8"/>
        <end position="9"/>
    </location>
    <ligand>
        <name>substrate</name>
    </ligand>
</feature>
<feature type="binding site" evidence="1">
    <location>
        <position position="65"/>
    </location>
    <ligand>
        <name>FMN</name>
        <dbReference type="ChEBI" id="CHEBI:58210"/>
    </ligand>
</feature>
<feature type="binding site" evidence="1">
    <location>
        <begin position="66"/>
        <end position="68"/>
    </location>
    <ligand>
        <name>FMN</name>
        <dbReference type="ChEBI" id="CHEBI:58210"/>
    </ligand>
</feature>
<feature type="binding site" evidence="1">
    <location>
        <begin position="99"/>
        <end position="101"/>
    </location>
    <ligand>
        <name>substrate</name>
    </ligand>
</feature>
<feature type="binding site" evidence="1">
    <location>
        <position position="99"/>
    </location>
    <ligand>
        <name>FMN</name>
        <dbReference type="ChEBI" id="CHEBI:58210"/>
    </ligand>
</feature>
<feature type="binding site" evidence="1">
    <location>
        <position position="127"/>
    </location>
    <ligand>
        <name>FMN</name>
        <dbReference type="ChEBI" id="CHEBI:58210"/>
    </ligand>
</feature>
<feature type="binding site" evidence="1">
    <location>
        <position position="166"/>
    </location>
    <ligand>
        <name>substrate</name>
    </ligand>
</feature>
<feature type="binding site" evidence="1">
    <location>
        <position position="167"/>
    </location>
    <ligand>
        <name>Mg(2+)</name>
        <dbReference type="ChEBI" id="CHEBI:18420"/>
    </ligand>
</feature>
<feature type="binding site" evidence="1">
    <location>
        <position position="198"/>
    </location>
    <ligand>
        <name>FMN</name>
        <dbReference type="ChEBI" id="CHEBI:58210"/>
    </ligand>
</feature>
<feature type="binding site" evidence="1">
    <location>
        <position position="223"/>
    </location>
    <ligand>
        <name>FMN</name>
        <dbReference type="ChEBI" id="CHEBI:58210"/>
    </ligand>
</feature>
<feature type="binding site" evidence="1">
    <location>
        <position position="228"/>
    </location>
    <ligand>
        <name>FMN</name>
        <dbReference type="ChEBI" id="CHEBI:58210"/>
    </ligand>
</feature>
<feature type="binding site" evidence="1">
    <location>
        <begin position="277"/>
        <end position="279"/>
    </location>
    <ligand>
        <name>FMN</name>
        <dbReference type="ChEBI" id="CHEBI:58210"/>
    </ligand>
</feature>
<feature type="binding site" evidence="1">
    <location>
        <begin position="298"/>
        <end position="299"/>
    </location>
    <ligand>
        <name>FMN</name>
        <dbReference type="ChEBI" id="CHEBI:58210"/>
    </ligand>
</feature>
<protein>
    <recommendedName>
        <fullName evidence="1">Isopentenyl-diphosphate delta-isomerase</fullName>
        <shortName evidence="1">IPP isomerase</shortName>
        <ecNumber evidence="1">5.3.3.2</ecNumber>
    </recommendedName>
    <alternativeName>
        <fullName evidence="1">Isopentenyl diphosphate:dimethylallyl diphosphate isomerase</fullName>
    </alternativeName>
    <alternativeName>
        <fullName evidence="1">Isopentenyl pyrophosphate isomerase</fullName>
    </alternativeName>
    <alternativeName>
        <fullName evidence="1">Type 2 isopentenyl diphosphate isomerase</fullName>
        <shortName evidence="1">IDI-2</shortName>
    </alternativeName>
</protein>
<gene>
    <name evidence="1" type="primary">fni</name>
    <name type="ordered locus">PYRAB10670</name>
    <name type="ORF">PAB1662</name>
</gene>
<keyword id="KW-0963">Cytoplasm</keyword>
<keyword id="KW-0285">Flavoprotein</keyword>
<keyword id="KW-0288">FMN</keyword>
<keyword id="KW-0413">Isomerase</keyword>
<keyword id="KW-0414">Isoprene biosynthesis</keyword>
<keyword id="KW-0460">Magnesium</keyword>
<keyword id="KW-0479">Metal-binding</keyword>
<keyword id="KW-0521">NADP</keyword>
<organism>
    <name type="scientific">Pyrococcus abyssi (strain GE5 / Orsay)</name>
    <dbReference type="NCBI Taxonomy" id="272844"/>
    <lineage>
        <taxon>Archaea</taxon>
        <taxon>Methanobacteriati</taxon>
        <taxon>Methanobacteriota</taxon>
        <taxon>Thermococci</taxon>
        <taxon>Thermococcales</taxon>
        <taxon>Thermococcaceae</taxon>
        <taxon>Pyrococcus</taxon>
    </lineage>
</organism>
<sequence length="370" mass="41071">MEEQTILRKFEHIKHCLTKNVEAHVTNGFEDVHLIHKSLPEIDKDEIDLSVKFLGRKFDYPIMITGMTGGTRKGEIAWRINRTLAQAAQELNIPLGLGSQRAMIEKPETWESYYVRDVAPDVFLVGNLGAPQFGRNAKKRYSVDEVLYAIEKIEADAIAIHMNPLQESIQPEGDTTFSGVLEALAEITSTIDYPVIAKETGAGVSKEVAVELEAVGVDAIDISGLGGTSWSAVEYYRTKDGEKRNLALKFWDWGIKTAISLAEVRWATNLPIIASGGMRDGITMAKALAMGASMVGIALPVLRPAAKGDVEGVIRIIKGYAEEIRNVMFLVGARNIKELRKVPLVITGFVREWLLQRIDLNSYLRARFKM</sequence>
<comment type="function">
    <text evidence="1">Involved in the biosynthesis of isoprenoids. Catalyzes the 1,3-allylic rearrangement of the homoallylic substrate isopentenyl (IPP) to its allylic isomer, dimethylallyl diphosphate (DMAPP).</text>
</comment>
<comment type="catalytic activity">
    <reaction evidence="1">
        <text>isopentenyl diphosphate = dimethylallyl diphosphate</text>
        <dbReference type="Rhea" id="RHEA:23284"/>
        <dbReference type="ChEBI" id="CHEBI:57623"/>
        <dbReference type="ChEBI" id="CHEBI:128769"/>
        <dbReference type="EC" id="5.3.3.2"/>
    </reaction>
</comment>
<comment type="cofactor">
    <cofactor evidence="1">
        <name>FMN</name>
        <dbReference type="ChEBI" id="CHEBI:58210"/>
    </cofactor>
</comment>
<comment type="cofactor">
    <cofactor evidence="1">
        <name>NADPH</name>
        <dbReference type="ChEBI" id="CHEBI:57783"/>
    </cofactor>
</comment>
<comment type="cofactor">
    <cofactor evidence="1">
        <name>Mg(2+)</name>
        <dbReference type="ChEBI" id="CHEBI:18420"/>
    </cofactor>
</comment>
<comment type="subunit">
    <text evidence="1">Homooctamer. Dimer of tetramers.</text>
</comment>
<comment type="subcellular location">
    <subcellularLocation>
        <location evidence="1">Cytoplasm</location>
    </subcellularLocation>
</comment>
<comment type="similarity">
    <text evidence="1">Belongs to the IPP isomerase type 2 family.</text>
</comment>